<dbReference type="EMBL" id="AE000782">
    <property type="protein sequence ID" value="AAB90425.1"/>
    <property type="molecule type" value="Genomic_DNA"/>
</dbReference>
<dbReference type="PIR" id="A69352">
    <property type="entry name" value="A69352"/>
</dbReference>
<dbReference type="RefSeq" id="WP_010878320.1">
    <property type="nucleotide sequence ID" value="NC_000917.1"/>
</dbReference>
<dbReference type="STRING" id="224325.AF_0817"/>
<dbReference type="PaxDb" id="224325-AF_0817"/>
<dbReference type="EnsemblBacteria" id="AAB90425">
    <property type="protein sequence ID" value="AAB90425"/>
    <property type="gene ID" value="AF_0817"/>
</dbReference>
<dbReference type="GeneID" id="1484036"/>
<dbReference type="KEGG" id="afu:AF_0817"/>
<dbReference type="eggNOG" id="arCOG02284">
    <property type="taxonomic scope" value="Archaea"/>
</dbReference>
<dbReference type="HOGENOM" id="CLU_015706_1_0_2"/>
<dbReference type="OrthoDB" id="28968at2157"/>
<dbReference type="PhylomeDB" id="O29441"/>
<dbReference type="Proteomes" id="UP000002199">
    <property type="component" value="Chromosome"/>
</dbReference>
<dbReference type="Gene3D" id="2.130.10.10">
    <property type="entry name" value="YVTN repeat-like/Quinoprotein amine dehydrogenase"/>
    <property type="match status" value="1"/>
</dbReference>
<dbReference type="InterPro" id="IPR019198">
    <property type="entry name" value="Beta_propeller_containing"/>
</dbReference>
<dbReference type="InterPro" id="IPR011047">
    <property type="entry name" value="Quinoprotein_ADH-like_sf"/>
</dbReference>
<dbReference type="InterPro" id="IPR014441">
    <property type="entry name" value="UCP006425_b-propeller"/>
</dbReference>
<dbReference type="InterPro" id="IPR015943">
    <property type="entry name" value="WD40/YVTN_repeat-like_dom_sf"/>
</dbReference>
<dbReference type="Pfam" id="PF09826">
    <property type="entry name" value="Beta_propel"/>
    <property type="match status" value="1"/>
</dbReference>
<dbReference type="PIRSF" id="PIRSF006425">
    <property type="entry name" value="UCP006425_WD40"/>
    <property type="match status" value="1"/>
</dbReference>
<dbReference type="SUPFAM" id="SSF50998">
    <property type="entry name" value="Quinoprotein alcohol dehydrogenase-like"/>
    <property type="match status" value="1"/>
</dbReference>
<reference key="1">
    <citation type="journal article" date="1997" name="Nature">
        <title>The complete genome sequence of the hyperthermophilic, sulphate-reducing archaeon Archaeoglobus fulgidus.</title>
        <authorList>
            <person name="Klenk H.-P."/>
            <person name="Clayton R.A."/>
            <person name="Tomb J.-F."/>
            <person name="White O."/>
            <person name="Nelson K.E."/>
            <person name="Ketchum K.A."/>
            <person name="Dodson R.J."/>
            <person name="Gwinn M.L."/>
            <person name="Hickey E.K."/>
            <person name="Peterson J.D."/>
            <person name="Richardson D.L."/>
            <person name="Kerlavage A.R."/>
            <person name="Graham D.E."/>
            <person name="Kyrpides N.C."/>
            <person name="Fleischmann R.D."/>
            <person name="Quackenbush J."/>
            <person name="Lee N.H."/>
            <person name="Sutton G.G."/>
            <person name="Gill S.R."/>
            <person name="Kirkness E.F."/>
            <person name="Dougherty B.A."/>
            <person name="McKenney K."/>
            <person name="Adams M.D."/>
            <person name="Loftus B.J."/>
            <person name="Peterson S.N."/>
            <person name="Reich C.I."/>
            <person name="McNeil L.K."/>
            <person name="Badger J.H."/>
            <person name="Glodek A."/>
            <person name="Zhou L."/>
            <person name="Overbeek R."/>
            <person name="Gocayne J.D."/>
            <person name="Weidman J.F."/>
            <person name="McDonald L.A."/>
            <person name="Utterback T.R."/>
            <person name="Cotton M.D."/>
            <person name="Spriggs T."/>
            <person name="Artiach P."/>
            <person name="Kaine B.P."/>
            <person name="Sykes S.M."/>
            <person name="Sadow P.W."/>
            <person name="D'Andrea K.P."/>
            <person name="Bowman C."/>
            <person name="Fujii C."/>
            <person name="Garland S.A."/>
            <person name="Mason T.M."/>
            <person name="Olsen G.J."/>
            <person name="Fraser C.M."/>
            <person name="Smith H.O."/>
            <person name="Woese C.R."/>
            <person name="Venter J.C."/>
        </authorList>
    </citation>
    <scope>NUCLEOTIDE SEQUENCE [LARGE SCALE GENOMIC DNA]</scope>
    <source>
        <strain>ATCC 49558 / DSM 4304 / JCM 9628 / NBRC 100126 / VC-16</strain>
    </source>
</reference>
<organism>
    <name type="scientific">Archaeoglobus fulgidus (strain ATCC 49558 / DSM 4304 / JCM 9628 / NBRC 100126 / VC-16)</name>
    <dbReference type="NCBI Taxonomy" id="224325"/>
    <lineage>
        <taxon>Archaea</taxon>
        <taxon>Methanobacteriati</taxon>
        <taxon>Methanobacteriota</taxon>
        <taxon>Archaeoglobi</taxon>
        <taxon>Archaeoglobales</taxon>
        <taxon>Archaeoglobaceae</taxon>
        <taxon>Archaeoglobus</taxon>
    </lineage>
</organism>
<keyword id="KW-1185">Reference proteome</keyword>
<keyword id="KW-0732">Signal</keyword>
<proteinExistence type="inferred from homology"/>
<accession>O29441</accession>
<feature type="signal peptide" evidence="1">
    <location>
        <begin position="1"/>
        <end position="21"/>
    </location>
</feature>
<feature type="chain" id="PRO_0000014018" description="Uncharacterized protein AF_0817">
    <location>
        <begin position="22"/>
        <end position="619"/>
    </location>
</feature>
<name>Y817_ARCFU</name>
<protein>
    <recommendedName>
        <fullName>Uncharacterized protein AF_0817</fullName>
    </recommendedName>
</protein>
<gene>
    <name type="ordered locus">AF_0817</name>
</gene>
<evidence type="ECO:0000255" key="1"/>
<sequence length="619" mass="70226">MKKLIAIIAVAAVVIAGFVFTANQPEQAEEVASLKTFSSPDEFREYLAKSAEISAFYPVVYTARAEVMVDSSKGAPLGEATPTAIPAVTTTPERYSETNVQVKGIDEPDIVKTDGVNIYYSPFPFIVYIRYPEKYYIDTTKVIRAFPPSNLSITGEIKESGNLLLHENVLMILNSEGIYAYNTETQKEVWSAEFNGSYVDARLYGGKLYVVTRSWLNFGEPCPIRPLTVNGKSVEIACSRIYHPTIPVTVDTTYTVVKLDAKTGEVENSVSFVGSSGMSVVYMSKNAIYVTYNSYADPAKLTYQFISENPDLVPDWIREKIEKLMDYDISSRAKQVEIMYLLEQLRASMSEDERLKFENEYYNRWENFTKKHAREIEKTHIAKFSLQLEAEGMNSVPGRLLNRFSLDEYNGYLRVATTVDWDENDLYVLDEKLEVVGKIQGFGLDERIYAVRFDGDVGFIVTFRQTDPFFVLDLSNPENPKIVGELKIPGFSSYLHRIDENTVLGVGREEGNVKLSLFDISDLTSPKEKNRYILQEYWSEVLSNHHAFLLDSQHGIFFLPAGQNGYIFSYKDGLKLIKAVKGNAVRAIYIDDYLYIIGPEEISVYDENSWEKVGELKLQ</sequence>